<feature type="chain" id="PRO_1000079658" description="GTPase Era">
    <location>
        <begin position="1"/>
        <end position="290"/>
    </location>
</feature>
<feature type="domain" description="Era-type G" evidence="2">
    <location>
        <begin position="2"/>
        <end position="169"/>
    </location>
</feature>
<feature type="domain" description="KH type-2" evidence="1">
    <location>
        <begin position="200"/>
        <end position="276"/>
    </location>
</feature>
<feature type="region of interest" description="G1" evidence="2">
    <location>
        <begin position="10"/>
        <end position="17"/>
    </location>
</feature>
<feature type="region of interest" description="G2" evidence="2">
    <location>
        <begin position="36"/>
        <end position="40"/>
    </location>
</feature>
<feature type="region of interest" description="G3" evidence="2">
    <location>
        <begin position="57"/>
        <end position="60"/>
    </location>
</feature>
<feature type="region of interest" description="G4" evidence="2">
    <location>
        <begin position="119"/>
        <end position="122"/>
    </location>
</feature>
<feature type="region of interest" description="G5" evidence="2">
    <location>
        <begin position="148"/>
        <end position="150"/>
    </location>
</feature>
<feature type="binding site" evidence="1">
    <location>
        <begin position="10"/>
        <end position="17"/>
    </location>
    <ligand>
        <name>GTP</name>
        <dbReference type="ChEBI" id="CHEBI:37565"/>
    </ligand>
</feature>
<feature type="binding site" evidence="1">
    <location>
        <begin position="57"/>
        <end position="61"/>
    </location>
    <ligand>
        <name>GTP</name>
        <dbReference type="ChEBI" id="CHEBI:37565"/>
    </ligand>
</feature>
<feature type="binding site" evidence="1">
    <location>
        <begin position="119"/>
        <end position="122"/>
    </location>
    <ligand>
        <name>GTP</name>
        <dbReference type="ChEBI" id="CHEBI:37565"/>
    </ligand>
</feature>
<accession>Q660L0</accession>
<sequence>MKSGFAAILGRPSTGKSTLLNSICGHKISIISPIPQTTRNKIKGIFTDDRGQIIFIDTPGFHLSKKKFNIAMMKNIHSSIGEVELILYIIDIQDKPGEEENKILEIIKNSKIKFLVLLNKVDLKNTKIKEITQFLKEKEIEDNNIIKISAEKKINTEELKNKIYENFSEGPLYYPQEYYTDQEINFRISEIIREKAIENLKEELPYSLYVDIDILENKKGSLFIRANIFVANESQKGIIVGKNGKEIKSIGERARITIAKIFETKCNLFLQVKLKKNWNKEDKLIKRLIN</sequence>
<name>ERA_BORGP</name>
<organism>
    <name type="scientific">Borrelia garinii subsp. bavariensis (strain ATCC BAA-2496 / DSM 23469 / PBi)</name>
    <name type="common">Borreliella bavariensis</name>
    <dbReference type="NCBI Taxonomy" id="290434"/>
    <lineage>
        <taxon>Bacteria</taxon>
        <taxon>Pseudomonadati</taxon>
        <taxon>Spirochaetota</taxon>
        <taxon>Spirochaetia</taxon>
        <taxon>Spirochaetales</taxon>
        <taxon>Borreliaceae</taxon>
        <taxon>Borreliella</taxon>
    </lineage>
</organism>
<proteinExistence type="inferred from homology"/>
<keyword id="KW-0997">Cell inner membrane</keyword>
<keyword id="KW-1003">Cell membrane</keyword>
<keyword id="KW-0963">Cytoplasm</keyword>
<keyword id="KW-0342">GTP-binding</keyword>
<keyword id="KW-0472">Membrane</keyword>
<keyword id="KW-0547">Nucleotide-binding</keyword>
<keyword id="KW-0690">Ribosome biogenesis</keyword>
<keyword id="KW-0694">RNA-binding</keyword>
<keyword id="KW-0699">rRNA-binding</keyword>
<comment type="function">
    <text evidence="1">An essential GTPase that binds both GDP and GTP, with rapid nucleotide exchange. Plays a role in 16S rRNA processing and 30S ribosomal subunit biogenesis and possibly also in cell cycle regulation and energy metabolism.</text>
</comment>
<comment type="subunit">
    <text evidence="1">Monomer.</text>
</comment>
<comment type="subcellular location">
    <subcellularLocation>
        <location>Cytoplasm</location>
    </subcellularLocation>
    <subcellularLocation>
        <location evidence="1">Cell inner membrane</location>
        <topology evidence="1">Peripheral membrane protein</topology>
    </subcellularLocation>
</comment>
<comment type="similarity">
    <text evidence="1 2">Belongs to the TRAFAC class TrmE-Era-EngA-EngB-Septin-like GTPase superfamily. Era GTPase family.</text>
</comment>
<protein>
    <recommendedName>
        <fullName evidence="1">GTPase Era</fullName>
    </recommendedName>
</protein>
<evidence type="ECO:0000255" key="1">
    <source>
        <dbReference type="HAMAP-Rule" id="MF_00367"/>
    </source>
</evidence>
<evidence type="ECO:0000255" key="2">
    <source>
        <dbReference type="PROSITE-ProRule" id="PRU01050"/>
    </source>
</evidence>
<gene>
    <name evidence="1" type="primary">era</name>
    <name type="ordered locus">BG0683</name>
</gene>
<reference key="1">
    <citation type="journal article" date="2004" name="Nucleic Acids Res.">
        <title>Comparative analysis of the Borrelia garinii genome.</title>
        <authorList>
            <person name="Gloeckner G."/>
            <person name="Lehmann R."/>
            <person name="Romualdi A."/>
            <person name="Pradella S."/>
            <person name="Schulte-Spechtel U."/>
            <person name="Schilhabel M."/>
            <person name="Wilske B."/>
            <person name="Suehnel J."/>
            <person name="Platzer M."/>
        </authorList>
    </citation>
    <scope>NUCLEOTIDE SEQUENCE [LARGE SCALE GENOMIC DNA]</scope>
    <source>
        <strain>ATCC BAA-2496 / DSM 23469 / PBi</strain>
    </source>
</reference>
<dbReference type="EMBL" id="CP000013">
    <property type="protein sequence ID" value="AAU07511.1"/>
    <property type="molecule type" value="Genomic_DNA"/>
</dbReference>
<dbReference type="RefSeq" id="WP_011193966.1">
    <property type="nucleotide sequence ID" value="NZ_CP028872.1"/>
</dbReference>
<dbReference type="SMR" id="Q660L0"/>
<dbReference type="GeneID" id="45161458"/>
<dbReference type="KEGG" id="bga:BG0683"/>
<dbReference type="eggNOG" id="COG1159">
    <property type="taxonomic scope" value="Bacteria"/>
</dbReference>
<dbReference type="HOGENOM" id="CLU_038009_1_0_12"/>
<dbReference type="OrthoDB" id="9805918at2"/>
<dbReference type="Proteomes" id="UP000002276">
    <property type="component" value="Chromosome"/>
</dbReference>
<dbReference type="GO" id="GO:0005829">
    <property type="term" value="C:cytosol"/>
    <property type="evidence" value="ECO:0007669"/>
    <property type="project" value="TreeGrafter"/>
</dbReference>
<dbReference type="GO" id="GO:0005886">
    <property type="term" value="C:plasma membrane"/>
    <property type="evidence" value="ECO:0007669"/>
    <property type="project" value="UniProtKB-SubCell"/>
</dbReference>
<dbReference type="GO" id="GO:0005525">
    <property type="term" value="F:GTP binding"/>
    <property type="evidence" value="ECO:0007669"/>
    <property type="project" value="UniProtKB-UniRule"/>
</dbReference>
<dbReference type="GO" id="GO:0003924">
    <property type="term" value="F:GTPase activity"/>
    <property type="evidence" value="ECO:0007669"/>
    <property type="project" value="UniProtKB-UniRule"/>
</dbReference>
<dbReference type="GO" id="GO:0043024">
    <property type="term" value="F:ribosomal small subunit binding"/>
    <property type="evidence" value="ECO:0007669"/>
    <property type="project" value="TreeGrafter"/>
</dbReference>
<dbReference type="GO" id="GO:0070181">
    <property type="term" value="F:small ribosomal subunit rRNA binding"/>
    <property type="evidence" value="ECO:0007669"/>
    <property type="project" value="UniProtKB-UniRule"/>
</dbReference>
<dbReference type="GO" id="GO:0000028">
    <property type="term" value="P:ribosomal small subunit assembly"/>
    <property type="evidence" value="ECO:0007669"/>
    <property type="project" value="TreeGrafter"/>
</dbReference>
<dbReference type="CDD" id="cd04163">
    <property type="entry name" value="Era"/>
    <property type="match status" value="1"/>
</dbReference>
<dbReference type="CDD" id="cd22534">
    <property type="entry name" value="KH-II_Era"/>
    <property type="match status" value="1"/>
</dbReference>
<dbReference type="Gene3D" id="3.30.300.20">
    <property type="match status" value="1"/>
</dbReference>
<dbReference type="Gene3D" id="3.40.50.300">
    <property type="entry name" value="P-loop containing nucleotide triphosphate hydrolases"/>
    <property type="match status" value="1"/>
</dbReference>
<dbReference type="HAMAP" id="MF_00367">
    <property type="entry name" value="GTPase_Era"/>
    <property type="match status" value="1"/>
</dbReference>
<dbReference type="InterPro" id="IPR030388">
    <property type="entry name" value="G_ERA_dom"/>
</dbReference>
<dbReference type="InterPro" id="IPR006073">
    <property type="entry name" value="GTP-bd"/>
</dbReference>
<dbReference type="InterPro" id="IPR005662">
    <property type="entry name" value="GTPase_Era-like"/>
</dbReference>
<dbReference type="InterPro" id="IPR015946">
    <property type="entry name" value="KH_dom-like_a/b"/>
</dbReference>
<dbReference type="InterPro" id="IPR004044">
    <property type="entry name" value="KH_dom_type_2"/>
</dbReference>
<dbReference type="InterPro" id="IPR009019">
    <property type="entry name" value="KH_sf_prok-type"/>
</dbReference>
<dbReference type="InterPro" id="IPR027417">
    <property type="entry name" value="P-loop_NTPase"/>
</dbReference>
<dbReference type="InterPro" id="IPR005225">
    <property type="entry name" value="Small_GTP-bd"/>
</dbReference>
<dbReference type="NCBIfam" id="TIGR00436">
    <property type="entry name" value="era"/>
    <property type="match status" value="1"/>
</dbReference>
<dbReference type="NCBIfam" id="NF000908">
    <property type="entry name" value="PRK00089.1"/>
    <property type="match status" value="1"/>
</dbReference>
<dbReference type="NCBIfam" id="TIGR00231">
    <property type="entry name" value="small_GTP"/>
    <property type="match status" value="1"/>
</dbReference>
<dbReference type="PANTHER" id="PTHR42698">
    <property type="entry name" value="GTPASE ERA"/>
    <property type="match status" value="1"/>
</dbReference>
<dbReference type="PANTHER" id="PTHR42698:SF1">
    <property type="entry name" value="GTPASE ERA, MITOCHONDRIAL"/>
    <property type="match status" value="1"/>
</dbReference>
<dbReference type="Pfam" id="PF07650">
    <property type="entry name" value="KH_2"/>
    <property type="match status" value="1"/>
</dbReference>
<dbReference type="Pfam" id="PF01926">
    <property type="entry name" value="MMR_HSR1"/>
    <property type="match status" value="1"/>
</dbReference>
<dbReference type="SUPFAM" id="SSF52540">
    <property type="entry name" value="P-loop containing nucleoside triphosphate hydrolases"/>
    <property type="match status" value="1"/>
</dbReference>
<dbReference type="SUPFAM" id="SSF54814">
    <property type="entry name" value="Prokaryotic type KH domain (KH-domain type II)"/>
    <property type="match status" value="1"/>
</dbReference>
<dbReference type="PROSITE" id="PS51713">
    <property type="entry name" value="G_ERA"/>
    <property type="match status" value="1"/>
</dbReference>
<dbReference type="PROSITE" id="PS50823">
    <property type="entry name" value="KH_TYPE_2"/>
    <property type="match status" value="1"/>
</dbReference>